<dbReference type="EC" id="3.4.23.36" evidence="1"/>
<dbReference type="EMBL" id="CP001233">
    <property type="protein sequence ID" value="ACP04964.1"/>
    <property type="molecule type" value="Genomic_DNA"/>
</dbReference>
<dbReference type="RefSeq" id="WP_000071968.1">
    <property type="nucleotide sequence ID" value="NC_012578.1"/>
</dbReference>
<dbReference type="SMR" id="C3LST8"/>
<dbReference type="MEROPS" id="A08.001"/>
<dbReference type="KEGG" id="vcm:VCM66_0641"/>
<dbReference type="HOGENOM" id="CLU_083252_4_0_6"/>
<dbReference type="UniPathway" id="UPA00665"/>
<dbReference type="Proteomes" id="UP000001217">
    <property type="component" value="Chromosome I"/>
</dbReference>
<dbReference type="GO" id="GO:0005886">
    <property type="term" value="C:plasma membrane"/>
    <property type="evidence" value="ECO:0007669"/>
    <property type="project" value="UniProtKB-SubCell"/>
</dbReference>
<dbReference type="GO" id="GO:0004190">
    <property type="term" value="F:aspartic-type endopeptidase activity"/>
    <property type="evidence" value="ECO:0007669"/>
    <property type="project" value="UniProtKB-UniRule"/>
</dbReference>
<dbReference type="GO" id="GO:0006508">
    <property type="term" value="P:proteolysis"/>
    <property type="evidence" value="ECO:0007669"/>
    <property type="project" value="UniProtKB-KW"/>
</dbReference>
<dbReference type="HAMAP" id="MF_00161">
    <property type="entry name" value="LspA"/>
    <property type="match status" value="1"/>
</dbReference>
<dbReference type="InterPro" id="IPR001872">
    <property type="entry name" value="Peptidase_A8"/>
</dbReference>
<dbReference type="NCBIfam" id="TIGR00077">
    <property type="entry name" value="lspA"/>
    <property type="match status" value="1"/>
</dbReference>
<dbReference type="PANTHER" id="PTHR33695">
    <property type="entry name" value="LIPOPROTEIN SIGNAL PEPTIDASE"/>
    <property type="match status" value="1"/>
</dbReference>
<dbReference type="PANTHER" id="PTHR33695:SF1">
    <property type="entry name" value="LIPOPROTEIN SIGNAL PEPTIDASE"/>
    <property type="match status" value="1"/>
</dbReference>
<dbReference type="Pfam" id="PF01252">
    <property type="entry name" value="Peptidase_A8"/>
    <property type="match status" value="1"/>
</dbReference>
<dbReference type="PRINTS" id="PR00781">
    <property type="entry name" value="LIPOSIGPTASE"/>
</dbReference>
<dbReference type="PROSITE" id="PS00855">
    <property type="entry name" value="SPASE_II"/>
    <property type="match status" value="1"/>
</dbReference>
<keyword id="KW-0064">Aspartyl protease</keyword>
<keyword id="KW-0997">Cell inner membrane</keyword>
<keyword id="KW-1003">Cell membrane</keyword>
<keyword id="KW-0378">Hydrolase</keyword>
<keyword id="KW-0472">Membrane</keyword>
<keyword id="KW-0645">Protease</keyword>
<keyword id="KW-0812">Transmembrane</keyword>
<keyword id="KW-1133">Transmembrane helix</keyword>
<reference key="1">
    <citation type="journal article" date="2008" name="PLoS ONE">
        <title>A recalibrated molecular clock and independent origins for the cholera pandemic clones.</title>
        <authorList>
            <person name="Feng L."/>
            <person name="Reeves P.R."/>
            <person name="Lan R."/>
            <person name="Ren Y."/>
            <person name="Gao C."/>
            <person name="Zhou Z."/>
            <person name="Ren Y."/>
            <person name="Cheng J."/>
            <person name="Wang W."/>
            <person name="Wang J."/>
            <person name="Qian W."/>
            <person name="Li D."/>
            <person name="Wang L."/>
        </authorList>
    </citation>
    <scope>NUCLEOTIDE SEQUENCE [LARGE SCALE GENOMIC DNA]</scope>
    <source>
        <strain>M66-2</strain>
    </source>
</reference>
<accession>C3LST8</accession>
<name>LSPA_VIBCM</name>
<protein>
    <recommendedName>
        <fullName evidence="1">Lipoprotein signal peptidase</fullName>
        <ecNumber evidence="1">3.4.23.36</ecNumber>
    </recommendedName>
    <alternativeName>
        <fullName evidence="1">Prolipoprotein signal peptidase</fullName>
    </alternativeName>
    <alternativeName>
        <fullName evidence="1">Signal peptidase II</fullName>
        <shortName evidence="1">SPase II</shortName>
    </alternativeName>
</protein>
<evidence type="ECO:0000255" key="1">
    <source>
        <dbReference type="HAMAP-Rule" id="MF_00161"/>
    </source>
</evidence>
<sequence>MSNSSLALKQSGLRWLWLALLVFIADITIKLIVMDNMGYGWANRIEVLPFFNLLYVHNYGAAFSFLSDQEGWQRWLFTGIAFVVTGMLAYWMRRLPASDKWNNIAYALIIGGAVGNVFDRIVHGFVVDYLDFYWGTYHWPAFNLADSTICIGAAMIILDGFRAKKSAPSQS</sequence>
<feature type="chain" id="PRO_1000123506" description="Lipoprotein signal peptidase">
    <location>
        <begin position="1"/>
        <end position="171"/>
    </location>
</feature>
<feature type="transmembrane region" description="Helical" evidence="1">
    <location>
        <begin position="15"/>
        <end position="35"/>
    </location>
</feature>
<feature type="transmembrane region" description="Helical" evidence="1">
    <location>
        <begin position="47"/>
        <end position="67"/>
    </location>
</feature>
<feature type="transmembrane region" description="Helical" evidence="1">
    <location>
        <begin position="72"/>
        <end position="92"/>
    </location>
</feature>
<feature type="transmembrane region" description="Helical" evidence="1">
    <location>
        <begin position="107"/>
        <end position="127"/>
    </location>
</feature>
<feature type="transmembrane region" description="Helical" evidence="1">
    <location>
        <begin position="141"/>
        <end position="161"/>
    </location>
</feature>
<feature type="active site" evidence="1">
    <location>
        <position position="128"/>
    </location>
</feature>
<feature type="active site" evidence="1">
    <location>
        <position position="146"/>
    </location>
</feature>
<gene>
    <name evidence="1" type="primary">lspA</name>
    <name type="ordered locus">VCM66_0641</name>
</gene>
<proteinExistence type="inferred from homology"/>
<organism>
    <name type="scientific">Vibrio cholerae serotype O1 (strain M66-2)</name>
    <dbReference type="NCBI Taxonomy" id="579112"/>
    <lineage>
        <taxon>Bacteria</taxon>
        <taxon>Pseudomonadati</taxon>
        <taxon>Pseudomonadota</taxon>
        <taxon>Gammaproteobacteria</taxon>
        <taxon>Vibrionales</taxon>
        <taxon>Vibrionaceae</taxon>
        <taxon>Vibrio</taxon>
    </lineage>
</organism>
<comment type="function">
    <text evidence="1">This protein specifically catalyzes the removal of signal peptides from prolipoproteins.</text>
</comment>
<comment type="catalytic activity">
    <reaction evidence="1">
        <text>Release of signal peptides from bacterial membrane prolipoproteins. Hydrolyzes -Xaa-Yaa-Zaa-|-(S,diacylglyceryl)Cys-, in which Xaa is hydrophobic (preferably Leu), and Yaa (Ala or Ser) and Zaa (Gly or Ala) have small, neutral side chains.</text>
        <dbReference type="EC" id="3.4.23.36"/>
    </reaction>
</comment>
<comment type="pathway">
    <text evidence="1">Protein modification; lipoprotein biosynthesis (signal peptide cleavage).</text>
</comment>
<comment type="subcellular location">
    <subcellularLocation>
        <location evidence="1">Cell inner membrane</location>
        <topology evidence="1">Multi-pass membrane protein</topology>
    </subcellularLocation>
</comment>
<comment type="similarity">
    <text evidence="1">Belongs to the peptidase A8 family.</text>
</comment>